<name>RNPA_RICRO</name>
<dbReference type="EC" id="3.1.26.5" evidence="1"/>
<dbReference type="EMBL" id="CP000766">
    <property type="protein sequence ID" value="ABY72902.1"/>
    <property type="molecule type" value="Genomic_DNA"/>
</dbReference>
<dbReference type="RefSeq" id="WP_012151092.1">
    <property type="nucleotide sequence ID" value="NC_010263.3"/>
</dbReference>
<dbReference type="SMR" id="B0BUJ2"/>
<dbReference type="GeneID" id="79937609"/>
<dbReference type="KEGG" id="rrj:RrIowa_1112"/>
<dbReference type="eggNOG" id="COG0594">
    <property type="taxonomic scope" value="Bacteria"/>
</dbReference>
<dbReference type="HOGENOM" id="CLU_2047938_0_0_5"/>
<dbReference type="Proteomes" id="UP000000796">
    <property type="component" value="Chromosome"/>
</dbReference>
<dbReference type="GO" id="GO:0030677">
    <property type="term" value="C:ribonuclease P complex"/>
    <property type="evidence" value="ECO:0007669"/>
    <property type="project" value="TreeGrafter"/>
</dbReference>
<dbReference type="GO" id="GO:0042781">
    <property type="term" value="F:3'-tRNA processing endoribonuclease activity"/>
    <property type="evidence" value="ECO:0007669"/>
    <property type="project" value="TreeGrafter"/>
</dbReference>
<dbReference type="GO" id="GO:0004526">
    <property type="term" value="F:ribonuclease P activity"/>
    <property type="evidence" value="ECO:0007669"/>
    <property type="project" value="UniProtKB-UniRule"/>
</dbReference>
<dbReference type="GO" id="GO:0000049">
    <property type="term" value="F:tRNA binding"/>
    <property type="evidence" value="ECO:0007669"/>
    <property type="project" value="UniProtKB-UniRule"/>
</dbReference>
<dbReference type="GO" id="GO:0001682">
    <property type="term" value="P:tRNA 5'-leader removal"/>
    <property type="evidence" value="ECO:0007669"/>
    <property type="project" value="UniProtKB-UniRule"/>
</dbReference>
<dbReference type="Gene3D" id="3.30.230.10">
    <property type="match status" value="1"/>
</dbReference>
<dbReference type="HAMAP" id="MF_00227">
    <property type="entry name" value="RNase_P"/>
    <property type="match status" value="1"/>
</dbReference>
<dbReference type="InterPro" id="IPR020568">
    <property type="entry name" value="Ribosomal_Su5_D2-typ_SF"/>
</dbReference>
<dbReference type="InterPro" id="IPR014721">
    <property type="entry name" value="Ribsml_uS5_D2-typ_fold_subgr"/>
</dbReference>
<dbReference type="InterPro" id="IPR000100">
    <property type="entry name" value="RNase_P"/>
</dbReference>
<dbReference type="InterPro" id="IPR020539">
    <property type="entry name" value="RNase_P_CS"/>
</dbReference>
<dbReference type="NCBIfam" id="TIGR00188">
    <property type="entry name" value="rnpA"/>
    <property type="match status" value="1"/>
</dbReference>
<dbReference type="PANTHER" id="PTHR33992">
    <property type="entry name" value="RIBONUCLEASE P PROTEIN COMPONENT"/>
    <property type="match status" value="1"/>
</dbReference>
<dbReference type="PANTHER" id="PTHR33992:SF1">
    <property type="entry name" value="RIBONUCLEASE P PROTEIN COMPONENT"/>
    <property type="match status" value="1"/>
</dbReference>
<dbReference type="Pfam" id="PF00825">
    <property type="entry name" value="Ribonuclease_P"/>
    <property type="match status" value="1"/>
</dbReference>
<dbReference type="SUPFAM" id="SSF54211">
    <property type="entry name" value="Ribosomal protein S5 domain 2-like"/>
    <property type="match status" value="1"/>
</dbReference>
<dbReference type="PROSITE" id="PS00648">
    <property type="entry name" value="RIBONUCLEASE_P"/>
    <property type="match status" value="1"/>
</dbReference>
<organism>
    <name type="scientific">Rickettsia rickettsii (strain Iowa)</name>
    <dbReference type="NCBI Taxonomy" id="452659"/>
    <lineage>
        <taxon>Bacteria</taxon>
        <taxon>Pseudomonadati</taxon>
        <taxon>Pseudomonadota</taxon>
        <taxon>Alphaproteobacteria</taxon>
        <taxon>Rickettsiales</taxon>
        <taxon>Rickettsiaceae</taxon>
        <taxon>Rickettsieae</taxon>
        <taxon>Rickettsia</taxon>
        <taxon>spotted fever group</taxon>
    </lineage>
</organism>
<protein>
    <recommendedName>
        <fullName evidence="1">Ribonuclease P protein component</fullName>
        <shortName evidence="1">RNase P protein</shortName>
        <shortName evidence="1">RNaseP protein</shortName>
        <ecNumber evidence="1">3.1.26.5</ecNumber>
    </recommendedName>
    <alternativeName>
        <fullName evidence="1">Protein C5</fullName>
    </alternativeName>
</protein>
<gene>
    <name evidence="1" type="primary">rnpA</name>
    <name type="ordered locus">RrIowa_1112</name>
</gene>
<comment type="function">
    <text evidence="1">RNaseP catalyzes the removal of the 5'-leader sequence from pre-tRNA to produce the mature 5'-terminus. It can also cleave other RNA substrates such as 4.5S RNA. The protein component plays an auxiliary but essential role in vivo by binding to the 5'-leader sequence and broadening the substrate specificity of the ribozyme.</text>
</comment>
<comment type="catalytic activity">
    <reaction evidence="1">
        <text>Endonucleolytic cleavage of RNA, removing 5'-extranucleotides from tRNA precursor.</text>
        <dbReference type="EC" id="3.1.26.5"/>
    </reaction>
</comment>
<comment type="subunit">
    <text evidence="1">Consists of a catalytic RNA component (M1 or rnpB) and a protein subunit.</text>
</comment>
<comment type="similarity">
    <text evidence="1">Belongs to the RnpA family.</text>
</comment>
<proteinExistence type="inferred from homology"/>
<evidence type="ECO:0000255" key="1">
    <source>
        <dbReference type="HAMAP-Rule" id="MF_00227"/>
    </source>
</evidence>
<sequence>MSITSLKNQKEFELINKLGKKLHERYFILVIATKLPKIFLESKYNTFLGIKVSRKLNKKAVVRNKIKRRIRHLIRIIVSDSSFKDIKFAMIIIPRKGFEEINFSHLNYELSKLILRNI</sequence>
<feature type="chain" id="PRO_1000100383" description="Ribonuclease P protein component">
    <location>
        <begin position="1"/>
        <end position="118"/>
    </location>
</feature>
<reference key="1">
    <citation type="journal article" date="2008" name="Infect. Immun.">
        <title>Genomic comparison of virulent Rickettsia rickettsii Sheila Smith and avirulent Rickettsia rickettsii Iowa.</title>
        <authorList>
            <person name="Ellison D.W."/>
            <person name="Clark T.R."/>
            <person name="Sturdevant D.E."/>
            <person name="Virtaneva K."/>
            <person name="Porcella S.F."/>
            <person name="Hackstadt T."/>
        </authorList>
    </citation>
    <scope>NUCLEOTIDE SEQUENCE [LARGE SCALE GENOMIC DNA]</scope>
    <source>
        <strain>Iowa</strain>
    </source>
</reference>
<keyword id="KW-0255">Endonuclease</keyword>
<keyword id="KW-0378">Hydrolase</keyword>
<keyword id="KW-0540">Nuclease</keyword>
<keyword id="KW-0694">RNA-binding</keyword>
<keyword id="KW-0819">tRNA processing</keyword>
<accession>B0BUJ2</accession>